<dbReference type="EC" id="5.4.2.12" evidence="1"/>
<dbReference type="EMBL" id="BA000026">
    <property type="protein sequence ID" value="BAC44163.1"/>
    <property type="status" value="ALT_INIT"/>
    <property type="molecule type" value="Genomic_DNA"/>
</dbReference>
<dbReference type="RefSeq" id="WP_044891240.1">
    <property type="nucleotide sequence ID" value="NC_004432.1"/>
</dbReference>
<dbReference type="SMR" id="Q8EW33"/>
<dbReference type="FunCoup" id="Q8EW33">
    <property type="interactions" value="146"/>
</dbReference>
<dbReference type="STRING" id="272633.gene:10731489"/>
<dbReference type="KEGG" id="mpe:MYPE3740"/>
<dbReference type="eggNOG" id="COG0696">
    <property type="taxonomic scope" value="Bacteria"/>
</dbReference>
<dbReference type="HOGENOM" id="CLU_026099_2_0_14"/>
<dbReference type="InParanoid" id="Q8EW33"/>
<dbReference type="UniPathway" id="UPA00109">
    <property type="reaction ID" value="UER00186"/>
</dbReference>
<dbReference type="Proteomes" id="UP000002522">
    <property type="component" value="Chromosome"/>
</dbReference>
<dbReference type="GO" id="GO:0005829">
    <property type="term" value="C:cytosol"/>
    <property type="evidence" value="ECO:0007669"/>
    <property type="project" value="TreeGrafter"/>
</dbReference>
<dbReference type="GO" id="GO:0030145">
    <property type="term" value="F:manganese ion binding"/>
    <property type="evidence" value="ECO:0007669"/>
    <property type="project" value="UniProtKB-UniRule"/>
</dbReference>
<dbReference type="GO" id="GO:0004619">
    <property type="term" value="F:phosphoglycerate mutase activity"/>
    <property type="evidence" value="ECO:0007669"/>
    <property type="project" value="UniProtKB-EC"/>
</dbReference>
<dbReference type="GO" id="GO:0006007">
    <property type="term" value="P:glucose catabolic process"/>
    <property type="evidence" value="ECO:0007669"/>
    <property type="project" value="InterPro"/>
</dbReference>
<dbReference type="GO" id="GO:0006096">
    <property type="term" value="P:glycolytic process"/>
    <property type="evidence" value="ECO:0007669"/>
    <property type="project" value="UniProtKB-UniRule"/>
</dbReference>
<dbReference type="CDD" id="cd16010">
    <property type="entry name" value="iPGM"/>
    <property type="match status" value="1"/>
</dbReference>
<dbReference type="FunFam" id="3.40.1450.10:FF:000002">
    <property type="entry name" value="2,3-bisphosphoglycerate-independent phosphoglycerate mutase"/>
    <property type="match status" value="1"/>
</dbReference>
<dbReference type="Gene3D" id="3.40.720.10">
    <property type="entry name" value="Alkaline Phosphatase, subunit A"/>
    <property type="match status" value="1"/>
</dbReference>
<dbReference type="Gene3D" id="3.40.1450.10">
    <property type="entry name" value="BPG-independent phosphoglycerate mutase, domain B"/>
    <property type="match status" value="1"/>
</dbReference>
<dbReference type="HAMAP" id="MF_01038">
    <property type="entry name" value="GpmI"/>
    <property type="match status" value="1"/>
</dbReference>
<dbReference type="InterPro" id="IPR017850">
    <property type="entry name" value="Alkaline_phosphatase_core_sf"/>
</dbReference>
<dbReference type="InterPro" id="IPR011258">
    <property type="entry name" value="BPG-indep_PGM_N"/>
</dbReference>
<dbReference type="InterPro" id="IPR006124">
    <property type="entry name" value="Metalloenzyme"/>
</dbReference>
<dbReference type="InterPro" id="IPR036646">
    <property type="entry name" value="PGAM_B_sf"/>
</dbReference>
<dbReference type="InterPro" id="IPR005995">
    <property type="entry name" value="Pgm_bpd_ind"/>
</dbReference>
<dbReference type="NCBIfam" id="TIGR01307">
    <property type="entry name" value="pgm_bpd_ind"/>
    <property type="match status" value="1"/>
</dbReference>
<dbReference type="PANTHER" id="PTHR31637">
    <property type="entry name" value="2,3-BISPHOSPHOGLYCERATE-INDEPENDENT PHOSPHOGLYCERATE MUTASE"/>
    <property type="match status" value="1"/>
</dbReference>
<dbReference type="PANTHER" id="PTHR31637:SF0">
    <property type="entry name" value="2,3-BISPHOSPHOGLYCERATE-INDEPENDENT PHOSPHOGLYCERATE MUTASE"/>
    <property type="match status" value="1"/>
</dbReference>
<dbReference type="Pfam" id="PF06415">
    <property type="entry name" value="iPGM_N"/>
    <property type="match status" value="1"/>
</dbReference>
<dbReference type="Pfam" id="PF01676">
    <property type="entry name" value="Metalloenzyme"/>
    <property type="match status" value="1"/>
</dbReference>
<dbReference type="PIRSF" id="PIRSF001492">
    <property type="entry name" value="IPGAM"/>
    <property type="match status" value="1"/>
</dbReference>
<dbReference type="SUPFAM" id="SSF64158">
    <property type="entry name" value="2,3-Bisphosphoglycerate-independent phosphoglycerate mutase, substrate-binding domain"/>
    <property type="match status" value="1"/>
</dbReference>
<dbReference type="SUPFAM" id="SSF53649">
    <property type="entry name" value="Alkaline phosphatase-like"/>
    <property type="match status" value="1"/>
</dbReference>
<reference key="1">
    <citation type="journal article" date="2002" name="Nucleic Acids Res.">
        <title>The complete genomic sequence of Mycoplasma penetrans, an intracellular bacterial pathogen in humans.</title>
        <authorList>
            <person name="Sasaki Y."/>
            <person name="Ishikawa J."/>
            <person name="Yamashita A."/>
            <person name="Oshima K."/>
            <person name="Kenri T."/>
            <person name="Furuya K."/>
            <person name="Yoshino C."/>
            <person name="Horino A."/>
            <person name="Shiba T."/>
            <person name="Sasaki T."/>
            <person name="Hattori M."/>
        </authorList>
    </citation>
    <scope>NUCLEOTIDE SEQUENCE [LARGE SCALE GENOMIC DNA]</scope>
    <source>
        <strain>HF-2</strain>
    </source>
</reference>
<gene>
    <name evidence="1" type="primary">gpmI</name>
    <name type="ordered locus">MYPE3740</name>
</gene>
<comment type="function">
    <text evidence="1">Catalyzes the interconversion of 2-phosphoglycerate and 3-phosphoglycerate.</text>
</comment>
<comment type="catalytic activity">
    <reaction evidence="1">
        <text>(2R)-2-phosphoglycerate = (2R)-3-phosphoglycerate</text>
        <dbReference type="Rhea" id="RHEA:15901"/>
        <dbReference type="ChEBI" id="CHEBI:58272"/>
        <dbReference type="ChEBI" id="CHEBI:58289"/>
        <dbReference type="EC" id="5.4.2.12"/>
    </reaction>
</comment>
<comment type="cofactor">
    <cofactor evidence="1">
        <name>Mn(2+)</name>
        <dbReference type="ChEBI" id="CHEBI:29035"/>
    </cofactor>
    <text evidence="1">Binds 2 manganese ions per subunit.</text>
</comment>
<comment type="pathway">
    <text evidence="1">Carbohydrate degradation; glycolysis; pyruvate from D-glyceraldehyde 3-phosphate: step 3/5.</text>
</comment>
<comment type="subunit">
    <text evidence="1">Monomer.</text>
</comment>
<comment type="similarity">
    <text evidence="1">Belongs to the BPG-independent phosphoglycerate mutase family.</text>
</comment>
<comment type="sequence caution" evidence="2">
    <conflict type="erroneous initiation">
        <sequence resource="EMBL-CDS" id="BAC44163"/>
    </conflict>
    <text>Extended N-terminus.</text>
</comment>
<organism>
    <name type="scientific">Malacoplasma penetrans (strain HF-2)</name>
    <name type="common">Mycoplasma penetrans</name>
    <dbReference type="NCBI Taxonomy" id="272633"/>
    <lineage>
        <taxon>Bacteria</taxon>
        <taxon>Bacillati</taxon>
        <taxon>Mycoplasmatota</taxon>
        <taxon>Mycoplasmoidales</taxon>
        <taxon>Mycoplasmoidaceae</taxon>
        <taxon>Malacoplasma</taxon>
    </lineage>
</organism>
<keyword id="KW-0324">Glycolysis</keyword>
<keyword id="KW-0413">Isomerase</keyword>
<keyword id="KW-0464">Manganese</keyword>
<keyword id="KW-0479">Metal-binding</keyword>
<keyword id="KW-1185">Reference proteome</keyword>
<name>GPMI_MALP2</name>
<protein>
    <recommendedName>
        <fullName evidence="1">2,3-bisphosphoglycerate-independent phosphoglycerate mutase</fullName>
        <shortName evidence="1">BPG-independent PGAM</shortName>
        <shortName evidence="1">Phosphoglyceromutase</shortName>
        <shortName evidence="1">iPGM</shortName>
        <ecNumber evidence="1">5.4.2.12</ecNumber>
    </recommendedName>
</protein>
<evidence type="ECO:0000255" key="1">
    <source>
        <dbReference type="HAMAP-Rule" id="MF_01038"/>
    </source>
</evidence>
<evidence type="ECO:0000305" key="2"/>
<proteinExistence type="inferred from homology"/>
<feature type="chain" id="PRO_0000212174" description="2,3-bisphosphoglycerate-independent phosphoglycerate mutase">
    <location>
        <begin position="1"/>
        <end position="502"/>
    </location>
</feature>
<feature type="active site" description="Phosphoserine intermediate" evidence="1">
    <location>
        <position position="62"/>
    </location>
</feature>
<feature type="binding site" evidence="1">
    <location>
        <position position="12"/>
    </location>
    <ligand>
        <name>Mn(2+)</name>
        <dbReference type="ChEBI" id="CHEBI:29035"/>
        <label>2</label>
    </ligand>
</feature>
<feature type="binding site" evidence="1">
    <location>
        <position position="62"/>
    </location>
    <ligand>
        <name>Mn(2+)</name>
        <dbReference type="ChEBI" id="CHEBI:29035"/>
        <label>2</label>
    </ligand>
</feature>
<feature type="binding site" evidence="1">
    <location>
        <position position="123"/>
    </location>
    <ligand>
        <name>substrate</name>
    </ligand>
</feature>
<feature type="binding site" evidence="1">
    <location>
        <begin position="152"/>
        <end position="153"/>
    </location>
    <ligand>
        <name>substrate</name>
    </ligand>
</feature>
<feature type="binding site" evidence="1">
    <location>
        <position position="183"/>
    </location>
    <ligand>
        <name>substrate</name>
    </ligand>
</feature>
<feature type="binding site" evidence="1">
    <location>
        <position position="189"/>
    </location>
    <ligand>
        <name>substrate</name>
    </ligand>
</feature>
<feature type="binding site" evidence="1">
    <location>
        <begin position="255"/>
        <end position="258"/>
    </location>
    <ligand>
        <name>substrate</name>
    </ligand>
</feature>
<feature type="binding site" evidence="1">
    <location>
        <position position="329"/>
    </location>
    <ligand>
        <name>substrate</name>
    </ligand>
</feature>
<feature type="binding site" evidence="1">
    <location>
        <position position="394"/>
    </location>
    <ligand>
        <name>Mn(2+)</name>
        <dbReference type="ChEBI" id="CHEBI:29035"/>
        <label>1</label>
    </ligand>
</feature>
<feature type="binding site" evidence="1">
    <location>
        <position position="398"/>
    </location>
    <ligand>
        <name>Mn(2+)</name>
        <dbReference type="ChEBI" id="CHEBI:29035"/>
        <label>1</label>
    </ligand>
</feature>
<feature type="binding site" evidence="1">
    <location>
        <position position="435"/>
    </location>
    <ligand>
        <name>Mn(2+)</name>
        <dbReference type="ChEBI" id="CHEBI:29035"/>
        <label>2</label>
    </ligand>
</feature>
<feature type="binding site" evidence="1">
    <location>
        <position position="436"/>
    </location>
    <ligand>
        <name>Mn(2+)</name>
        <dbReference type="ChEBI" id="CHEBI:29035"/>
        <label>2</label>
    </ligand>
</feature>
<feature type="binding site" evidence="1">
    <location>
        <position position="453"/>
    </location>
    <ligand>
        <name>Mn(2+)</name>
        <dbReference type="ChEBI" id="CHEBI:29035"/>
        <label>1</label>
    </ligand>
</feature>
<sequence>MKKGPVLLAVLDGYGFSKDTKGNAILNAKTPFMDNLVKEYDHCYIEASGEYVGLPDGQIGNSEVGHLTIGAGRIVYTGLSLINQDIKTKKFDSNKTLLEAINHAKKNNSNIHIMGLLSPGGVHSNEQHIFEMIRIVSENGLKPVIHVFGDGRDVAPQSIISSLERLNDVLKKYPGTIATISGRFYSMDRDKRWERTKQAYDNLLGISNNYFDNPIDYVNKQYSENIFDEFLVPARINDSNVVIKDNDAVIHANFRPDRARQISHLFCGSTVYEEKNDHPLKNLYYAIMMTYEGITPTSILFPTVVVKNTFGEVVANSGLTQLRIAETEKYAHVTFFFDGGVEVDLKNESKILVDSKKVKTYDEVPAMSAVEITDKLIENLDKFDVIVLNFANADMVGHTGKYNEAVLAIEALDSQLARIDQKIKELNGTMFITADHGNAEVMLDDDNNPVTKHTTNPVIFISNNKDVKFNKPGSLGNVAPTILDFMGLEIPADMDKKSLLKK</sequence>
<accession>Q8EW33</accession>